<name>RRP3_THEVB</name>
<comment type="function">
    <text evidence="1">Probably a ribosomal protein or a ribosome-associated protein.</text>
</comment>
<comment type="subunit">
    <text evidence="3">Part of the 30S ribosomal subunit.</text>
</comment>
<comment type="similarity">
    <text evidence="3">Belongs to the chloroplast-specific ribosomal protein cS23 family.</text>
</comment>
<reference key="1">
    <citation type="journal article" date="2002" name="DNA Res.">
        <title>Complete genome structure of the thermophilic cyanobacterium Thermosynechococcus elongatus BP-1.</title>
        <authorList>
            <person name="Nakamura Y."/>
            <person name="Kaneko T."/>
            <person name="Sato S."/>
            <person name="Ikeuchi M."/>
            <person name="Katoh H."/>
            <person name="Sasamoto S."/>
            <person name="Watanabe A."/>
            <person name="Iriguchi M."/>
            <person name="Kawashima K."/>
            <person name="Kimura T."/>
            <person name="Kishida Y."/>
            <person name="Kiyokawa C."/>
            <person name="Kohara M."/>
            <person name="Matsumoto M."/>
            <person name="Matsuno A."/>
            <person name="Nakazaki N."/>
            <person name="Shimpo S."/>
            <person name="Sugimoto M."/>
            <person name="Takeuchi C."/>
            <person name="Yamada M."/>
            <person name="Tabata S."/>
        </authorList>
    </citation>
    <scope>NUCLEOTIDE SEQUENCE [LARGE SCALE GENOMIC DNA]</scope>
    <source>
        <strain>NIES-2133 / IAM M-273 / BP-1</strain>
    </source>
</reference>
<proteinExistence type="inferred from homology"/>
<accession>P59327</accession>
<gene>
    <name type="ordered locus">tlr0301</name>
</gene>
<feature type="chain" id="PRO_0000216752" description="Probable small ribosomal subunit protein cS23">
    <location>
        <begin position="1"/>
        <end position="108"/>
    </location>
</feature>
<evidence type="ECO:0000250" key="1"/>
<evidence type="ECO:0000255" key="2">
    <source>
        <dbReference type="HAMAP-Rule" id="MF_00619"/>
    </source>
</evidence>
<evidence type="ECO:0000305" key="3"/>
<dbReference type="EMBL" id="BA000039">
    <property type="protein sequence ID" value="BAC07854.1"/>
    <property type="molecule type" value="Genomic_DNA"/>
</dbReference>
<dbReference type="RefSeq" id="NP_681092.1">
    <property type="nucleotide sequence ID" value="NC_004113.1"/>
</dbReference>
<dbReference type="RefSeq" id="WP_011056156.1">
    <property type="nucleotide sequence ID" value="NC_004113.1"/>
</dbReference>
<dbReference type="SMR" id="P59327"/>
<dbReference type="STRING" id="197221.gene:10746884"/>
<dbReference type="EnsemblBacteria" id="BAC07854">
    <property type="protein sequence ID" value="BAC07854"/>
    <property type="gene ID" value="BAC07854"/>
</dbReference>
<dbReference type="KEGG" id="tel:tlr0301"/>
<dbReference type="PATRIC" id="fig|197221.4.peg.315"/>
<dbReference type="eggNOG" id="ENOG503137T">
    <property type="taxonomic scope" value="Bacteria"/>
</dbReference>
<dbReference type="Proteomes" id="UP000000440">
    <property type="component" value="Chromosome"/>
</dbReference>
<dbReference type="GO" id="GO:1990904">
    <property type="term" value="C:ribonucleoprotein complex"/>
    <property type="evidence" value="ECO:0007669"/>
    <property type="project" value="UniProtKB-KW"/>
</dbReference>
<dbReference type="GO" id="GO:0005840">
    <property type="term" value="C:ribosome"/>
    <property type="evidence" value="ECO:0007669"/>
    <property type="project" value="UniProtKB-KW"/>
</dbReference>
<dbReference type="GO" id="GO:0003735">
    <property type="term" value="F:structural constituent of ribosome"/>
    <property type="evidence" value="ECO:0007669"/>
    <property type="project" value="InterPro"/>
</dbReference>
<dbReference type="GO" id="GO:0006412">
    <property type="term" value="P:translation"/>
    <property type="evidence" value="ECO:0007669"/>
    <property type="project" value="UniProtKB-UniRule"/>
</dbReference>
<dbReference type="Gene3D" id="3.30.390.140">
    <property type="match status" value="1"/>
</dbReference>
<dbReference type="HAMAP" id="MF_00619">
    <property type="entry name" value="Ribosomal_plastid_cS23"/>
    <property type="match status" value="1"/>
</dbReference>
<dbReference type="InterPro" id="IPR038447">
    <property type="entry name" value="PSRP-3/Ycf65_sf"/>
</dbReference>
<dbReference type="InterPro" id="IPR006924">
    <property type="entry name" value="Ribosomal_PSRP3/Ycf65"/>
</dbReference>
<dbReference type="NCBIfam" id="NF002740">
    <property type="entry name" value="PRK02724.1"/>
    <property type="match status" value="1"/>
</dbReference>
<dbReference type="PANTHER" id="PTHR35108">
    <property type="entry name" value="30S RIBOSOMAL PROTEIN 3, CHLOROPLASTIC"/>
    <property type="match status" value="1"/>
</dbReference>
<dbReference type="PANTHER" id="PTHR35108:SF1">
    <property type="entry name" value="OS04G0461100 PROTEIN"/>
    <property type="match status" value="1"/>
</dbReference>
<dbReference type="Pfam" id="PF04839">
    <property type="entry name" value="PSRP-3_Ycf65"/>
    <property type="match status" value="1"/>
</dbReference>
<sequence>MKISFRRLELSRFTLRVLWLEKDVAIAVDQIVGKGTSPLTSYFFWPRTDAWELLKAELEKKSWITEAERIELLNRATEIINYWQEEGKNHPVSEAQKRFSDVSFVGTA</sequence>
<keyword id="KW-1185">Reference proteome</keyword>
<keyword id="KW-0687">Ribonucleoprotein</keyword>
<keyword id="KW-0689">Ribosomal protein</keyword>
<protein>
    <recommendedName>
        <fullName evidence="2">Probable small ribosomal subunit protein cS23</fullName>
    </recommendedName>
    <alternativeName>
        <fullName>Probable 30S ribosomal protein PSRP-3</fullName>
    </alternativeName>
    <alternativeName>
        <fullName>Ycf65-like protein</fullName>
    </alternativeName>
</protein>
<organism>
    <name type="scientific">Thermosynechococcus vestitus (strain NIES-2133 / IAM M-273 / BP-1)</name>
    <dbReference type="NCBI Taxonomy" id="197221"/>
    <lineage>
        <taxon>Bacteria</taxon>
        <taxon>Bacillati</taxon>
        <taxon>Cyanobacteriota</taxon>
        <taxon>Cyanophyceae</taxon>
        <taxon>Acaryochloridales</taxon>
        <taxon>Thermosynechococcaceae</taxon>
        <taxon>Thermosynechococcus</taxon>
    </lineage>
</organism>